<dbReference type="EC" id="1.1.1.94" evidence="1"/>
<dbReference type="EMBL" id="CP000489">
    <property type="protein sequence ID" value="ABL70091.1"/>
    <property type="molecule type" value="Genomic_DNA"/>
</dbReference>
<dbReference type="RefSeq" id="WP_011748288.1">
    <property type="nucleotide sequence ID" value="NC_008686.1"/>
</dbReference>
<dbReference type="SMR" id="A1B3J7"/>
<dbReference type="STRING" id="318586.Pden_1999"/>
<dbReference type="EnsemblBacteria" id="ABL70091">
    <property type="protein sequence ID" value="ABL70091"/>
    <property type="gene ID" value="Pden_1999"/>
</dbReference>
<dbReference type="GeneID" id="93450403"/>
<dbReference type="KEGG" id="pde:Pden_1999"/>
<dbReference type="eggNOG" id="COG0240">
    <property type="taxonomic scope" value="Bacteria"/>
</dbReference>
<dbReference type="HOGENOM" id="CLU_033449_0_2_5"/>
<dbReference type="OrthoDB" id="9812273at2"/>
<dbReference type="UniPathway" id="UPA00940"/>
<dbReference type="Proteomes" id="UP000000361">
    <property type="component" value="Chromosome 1"/>
</dbReference>
<dbReference type="GO" id="GO:0005829">
    <property type="term" value="C:cytosol"/>
    <property type="evidence" value="ECO:0007669"/>
    <property type="project" value="TreeGrafter"/>
</dbReference>
<dbReference type="GO" id="GO:0047952">
    <property type="term" value="F:glycerol-3-phosphate dehydrogenase [NAD(P)+] activity"/>
    <property type="evidence" value="ECO:0007669"/>
    <property type="project" value="UniProtKB-UniRule"/>
</dbReference>
<dbReference type="GO" id="GO:0051287">
    <property type="term" value="F:NAD binding"/>
    <property type="evidence" value="ECO:0007669"/>
    <property type="project" value="InterPro"/>
</dbReference>
<dbReference type="GO" id="GO:0005975">
    <property type="term" value="P:carbohydrate metabolic process"/>
    <property type="evidence" value="ECO:0007669"/>
    <property type="project" value="InterPro"/>
</dbReference>
<dbReference type="GO" id="GO:0046167">
    <property type="term" value="P:glycerol-3-phosphate biosynthetic process"/>
    <property type="evidence" value="ECO:0007669"/>
    <property type="project" value="UniProtKB-UniRule"/>
</dbReference>
<dbReference type="GO" id="GO:0046168">
    <property type="term" value="P:glycerol-3-phosphate catabolic process"/>
    <property type="evidence" value="ECO:0007669"/>
    <property type="project" value="InterPro"/>
</dbReference>
<dbReference type="GO" id="GO:0006650">
    <property type="term" value="P:glycerophospholipid metabolic process"/>
    <property type="evidence" value="ECO:0007669"/>
    <property type="project" value="UniProtKB-UniRule"/>
</dbReference>
<dbReference type="GO" id="GO:0008654">
    <property type="term" value="P:phospholipid biosynthetic process"/>
    <property type="evidence" value="ECO:0007669"/>
    <property type="project" value="UniProtKB-KW"/>
</dbReference>
<dbReference type="Gene3D" id="1.10.1040.10">
    <property type="entry name" value="N-(1-d-carboxylethyl)-l-norvaline Dehydrogenase, domain 2"/>
    <property type="match status" value="1"/>
</dbReference>
<dbReference type="Gene3D" id="3.40.50.720">
    <property type="entry name" value="NAD(P)-binding Rossmann-like Domain"/>
    <property type="match status" value="1"/>
</dbReference>
<dbReference type="HAMAP" id="MF_00394">
    <property type="entry name" value="NAD_Glyc3P_dehydrog"/>
    <property type="match status" value="1"/>
</dbReference>
<dbReference type="InterPro" id="IPR008927">
    <property type="entry name" value="6-PGluconate_DH-like_C_sf"/>
</dbReference>
<dbReference type="InterPro" id="IPR013328">
    <property type="entry name" value="6PGD_dom2"/>
</dbReference>
<dbReference type="InterPro" id="IPR006168">
    <property type="entry name" value="G3P_DH_NAD-dep"/>
</dbReference>
<dbReference type="InterPro" id="IPR006109">
    <property type="entry name" value="G3P_DH_NAD-dep_C"/>
</dbReference>
<dbReference type="InterPro" id="IPR011128">
    <property type="entry name" value="G3P_DH_NAD-dep_N"/>
</dbReference>
<dbReference type="InterPro" id="IPR036291">
    <property type="entry name" value="NAD(P)-bd_dom_sf"/>
</dbReference>
<dbReference type="NCBIfam" id="NF000940">
    <property type="entry name" value="PRK00094.1-2"/>
    <property type="match status" value="1"/>
</dbReference>
<dbReference type="NCBIfam" id="NF000942">
    <property type="entry name" value="PRK00094.1-4"/>
    <property type="match status" value="1"/>
</dbReference>
<dbReference type="PANTHER" id="PTHR11728">
    <property type="entry name" value="GLYCEROL-3-PHOSPHATE DEHYDROGENASE"/>
    <property type="match status" value="1"/>
</dbReference>
<dbReference type="PANTHER" id="PTHR11728:SF1">
    <property type="entry name" value="GLYCEROL-3-PHOSPHATE DEHYDROGENASE [NAD(+)] 2, CHLOROPLASTIC"/>
    <property type="match status" value="1"/>
</dbReference>
<dbReference type="Pfam" id="PF07479">
    <property type="entry name" value="NAD_Gly3P_dh_C"/>
    <property type="match status" value="1"/>
</dbReference>
<dbReference type="Pfam" id="PF01210">
    <property type="entry name" value="NAD_Gly3P_dh_N"/>
    <property type="match status" value="1"/>
</dbReference>
<dbReference type="PIRSF" id="PIRSF000114">
    <property type="entry name" value="Glycerol-3-P_dh"/>
    <property type="match status" value="1"/>
</dbReference>
<dbReference type="PRINTS" id="PR00077">
    <property type="entry name" value="GPDHDRGNASE"/>
</dbReference>
<dbReference type="SUPFAM" id="SSF48179">
    <property type="entry name" value="6-phosphogluconate dehydrogenase C-terminal domain-like"/>
    <property type="match status" value="1"/>
</dbReference>
<dbReference type="SUPFAM" id="SSF51735">
    <property type="entry name" value="NAD(P)-binding Rossmann-fold domains"/>
    <property type="match status" value="1"/>
</dbReference>
<dbReference type="PROSITE" id="PS00957">
    <property type="entry name" value="NAD_G3PDH"/>
    <property type="match status" value="1"/>
</dbReference>
<protein>
    <recommendedName>
        <fullName evidence="1">Glycerol-3-phosphate dehydrogenase [NAD(P)+]</fullName>
        <ecNumber evidence="1">1.1.1.94</ecNumber>
    </recommendedName>
    <alternativeName>
        <fullName evidence="1">NAD(P)(+)-dependent glycerol-3-phosphate dehydrogenase</fullName>
    </alternativeName>
    <alternativeName>
        <fullName evidence="1">NAD(P)H-dependent dihydroxyacetone-phosphate reductase</fullName>
    </alternativeName>
</protein>
<keyword id="KW-0963">Cytoplasm</keyword>
<keyword id="KW-0444">Lipid biosynthesis</keyword>
<keyword id="KW-0443">Lipid metabolism</keyword>
<keyword id="KW-0520">NAD</keyword>
<keyword id="KW-0521">NADP</keyword>
<keyword id="KW-0547">Nucleotide-binding</keyword>
<keyword id="KW-0560">Oxidoreductase</keyword>
<keyword id="KW-0594">Phospholipid biosynthesis</keyword>
<keyword id="KW-1208">Phospholipid metabolism</keyword>
<keyword id="KW-1185">Reference proteome</keyword>
<gene>
    <name evidence="1" type="primary">gpsA</name>
    <name type="ordered locus">Pden_1999</name>
</gene>
<evidence type="ECO:0000255" key="1">
    <source>
        <dbReference type="HAMAP-Rule" id="MF_00394"/>
    </source>
</evidence>
<name>GPDA_PARDP</name>
<accession>A1B3J7</accession>
<reference key="1">
    <citation type="submission" date="2006-12" db="EMBL/GenBank/DDBJ databases">
        <title>Complete sequence of chromosome 1 of Paracoccus denitrificans PD1222.</title>
        <authorList>
            <person name="Copeland A."/>
            <person name="Lucas S."/>
            <person name="Lapidus A."/>
            <person name="Barry K."/>
            <person name="Detter J.C."/>
            <person name="Glavina del Rio T."/>
            <person name="Hammon N."/>
            <person name="Israni S."/>
            <person name="Dalin E."/>
            <person name="Tice H."/>
            <person name="Pitluck S."/>
            <person name="Munk A.C."/>
            <person name="Brettin T."/>
            <person name="Bruce D."/>
            <person name="Han C."/>
            <person name="Tapia R."/>
            <person name="Gilna P."/>
            <person name="Schmutz J."/>
            <person name="Larimer F."/>
            <person name="Land M."/>
            <person name="Hauser L."/>
            <person name="Kyrpides N."/>
            <person name="Lykidis A."/>
            <person name="Spiro S."/>
            <person name="Richardson D.J."/>
            <person name="Moir J.W.B."/>
            <person name="Ferguson S.J."/>
            <person name="van Spanning R.J.M."/>
            <person name="Richardson P."/>
        </authorList>
    </citation>
    <scope>NUCLEOTIDE SEQUENCE [LARGE SCALE GENOMIC DNA]</scope>
    <source>
        <strain>Pd 1222</strain>
    </source>
</reference>
<organism>
    <name type="scientific">Paracoccus denitrificans (strain Pd 1222)</name>
    <dbReference type="NCBI Taxonomy" id="318586"/>
    <lineage>
        <taxon>Bacteria</taxon>
        <taxon>Pseudomonadati</taxon>
        <taxon>Pseudomonadota</taxon>
        <taxon>Alphaproteobacteria</taxon>
        <taxon>Rhodobacterales</taxon>
        <taxon>Paracoccaceae</taxon>
        <taxon>Paracoccus</taxon>
    </lineage>
</organism>
<feature type="chain" id="PRO_1000049531" description="Glycerol-3-phosphate dehydrogenase [NAD(P)+]">
    <location>
        <begin position="1"/>
        <end position="314"/>
    </location>
</feature>
<feature type="active site" description="Proton acceptor" evidence="1">
    <location>
        <position position="179"/>
    </location>
</feature>
<feature type="binding site" evidence="1">
    <location>
        <position position="11"/>
    </location>
    <ligand>
        <name>NADPH</name>
        <dbReference type="ChEBI" id="CHEBI:57783"/>
    </ligand>
</feature>
<feature type="binding site" evidence="1">
    <location>
        <position position="30"/>
    </location>
    <ligand>
        <name>NADPH</name>
        <dbReference type="ChEBI" id="CHEBI:57783"/>
    </ligand>
</feature>
<feature type="binding site" evidence="1">
    <location>
        <position position="96"/>
    </location>
    <ligand>
        <name>NADPH</name>
        <dbReference type="ChEBI" id="CHEBI:57783"/>
    </ligand>
</feature>
<feature type="binding site" evidence="1">
    <location>
        <position position="96"/>
    </location>
    <ligand>
        <name>sn-glycerol 3-phosphate</name>
        <dbReference type="ChEBI" id="CHEBI:57597"/>
    </ligand>
</feature>
<feature type="binding site" evidence="1">
    <location>
        <position position="124"/>
    </location>
    <ligand>
        <name>sn-glycerol 3-phosphate</name>
        <dbReference type="ChEBI" id="CHEBI:57597"/>
    </ligand>
</feature>
<feature type="binding site" evidence="1">
    <location>
        <position position="126"/>
    </location>
    <ligand>
        <name>sn-glycerol 3-phosphate</name>
        <dbReference type="ChEBI" id="CHEBI:57597"/>
    </ligand>
</feature>
<feature type="binding site" evidence="1">
    <location>
        <position position="128"/>
    </location>
    <ligand>
        <name>NADPH</name>
        <dbReference type="ChEBI" id="CHEBI:57783"/>
    </ligand>
</feature>
<feature type="binding site" evidence="1">
    <location>
        <position position="179"/>
    </location>
    <ligand>
        <name>sn-glycerol 3-phosphate</name>
        <dbReference type="ChEBI" id="CHEBI:57597"/>
    </ligand>
</feature>
<feature type="binding site" evidence="1">
    <location>
        <position position="232"/>
    </location>
    <ligand>
        <name>sn-glycerol 3-phosphate</name>
        <dbReference type="ChEBI" id="CHEBI:57597"/>
    </ligand>
</feature>
<feature type="binding site" evidence="1">
    <location>
        <position position="242"/>
    </location>
    <ligand>
        <name>sn-glycerol 3-phosphate</name>
        <dbReference type="ChEBI" id="CHEBI:57597"/>
    </ligand>
</feature>
<feature type="binding site" evidence="1">
    <location>
        <position position="243"/>
    </location>
    <ligand>
        <name>NADPH</name>
        <dbReference type="ChEBI" id="CHEBI:57783"/>
    </ligand>
</feature>
<feature type="binding site" evidence="1">
    <location>
        <position position="243"/>
    </location>
    <ligand>
        <name>sn-glycerol 3-phosphate</name>
        <dbReference type="ChEBI" id="CHEBI:57597"/>
    </ligand>
</feature>
<feature type="binding site" evidence="1">
    <location>
        <position position="244"/>
    </location>
    <ligand>
        <name>sn-glycerol 3-phosphate</name>
        <dbReference type="ChEBI" id="CHEBI:57597"/>
    </ligand>
</feature>
<feature type="binding site" evidence="1">
    <location>
        <position position="264"/>
    </location>
    <ligand>
        <name>NADPH</name>
        <dbReference type="ChEBI" id="CHEBI:57783"/>
    </ligand>
</feature>
<comment type="function">
    <text evidence="1">Catalyzes the reduction of the glycolytic intermediate dihydroxyacetone phosphate (DHAP) to sn-glycerol 3-phosphate (G3P), the key precursor for phospholipid synthesis.</text>
</comment>
<comment type="catalytic activity">
    <reaction evidence="1">
        <text>sn-glycerol 3-phosphate + NAD(+) = dihydroxyacetone phosphate + NADH + H(+)</text>
        <dbReference type="Rhea" id="RHEA:11092"/>
        <dbReference type="ChEBI" id="CHEBI:15378"/>
        <dbReference type="ChEBI" id="CHEBI:57540"/>
        <dbReference type="ChEBI" id="CHEBI:57597"/>
        <dbReference type="ChEBI" id="CHEBI:57642"/>
        <dbReference type="ChEBI" id="CHEBI:57945"/>
        <dbReference type="EC" id="1.1.1.94"/>
    </reaction>
    <physiologicalReaction direction="right-to-left" evidence="1">
        <dbReference type="Rhea" id="RHEA:11094"/>
    </physiologicalReaction>
</comment>
<comment type="catalytic activity">
    <reaction evidence="1">
        <text>sn-glycerol 3-phosphate + NADP(+) = dihydroxyacetone phosphate + NADPH + H(+)</text>
        <dbReference type="Rhea" id="RHEA:11096"/>
        <dbReference type="ChEBI" id="CHEBI:15378"/>
        <dbReference type="ChEBI" id="CHEBI:57597"/>
        <dbReference type="ChEBI" id="CHEBI:57642"/>
        <dbReference type="ChEBI" id="CHEBI:57783"/>
        <dbReference type="ChEBI" id="CHEBI:58349"/>
        <dbReference type="EC" id="1.1.1.94"/>
    </reaction>
    <physiologicalReaction direction="right-to-left" evidence="1">
        <dbReference type="Rhea" id="RHEA:11098"/>
    </physiologicalReaction>
</comment>
<comment type="pathway">
    <text evidence="1">Membrane lipid metabolism; glycerophospholipid metabolism.</text>
</comment>
<comment type="subcellular location">
    <subcellularLocation>
        <location evidence="1">Cytoplasm</location>
    </subcellularLocation>
</comment>
<comment type="similarity">
    <text evidence="1">Belongs to the NAD-dependent glycerol-3-phosphate dehydrogenase family.</text>
</comment>
<sequence length="314" mass="32106">MSVAIIGAGAFGTALAVSLATKGPVTLWGRDTEWADTGENPRLPGVPLPPALRVTDRLDEITAETVLLALPAQVLGGFLAEHGAQFDRRNLVSCAKGIDLATLTGPSALIAAACPQATVAVLTGPSFAADIARGLPTALTLACADAGAAEALQRQLSTATLRLYRTTDVTGAELGGALKNIIAIAAGAAIGAGYGDSARASVVTRGFAEMLRLATALGARPETLPGLSGLGDLVLTCTSEQSRNFRYGLALGSRRPFAAGTTVEGASTARAVTQLAERLGIEMPISNLVAGLAEGRIAMEHALDFLLNRPLKEE</sequence>
<proteinExistence type="inferred from homology"/>